<keyword id="KW-0131">Cell cycle</keyword>
<keyword id="KW-0143">Chaperone</keyword>
<keyword id="KW-0156">Chromatin regulator</keyword>
<keyword id="KW-0227">DNA damage</keyword>
<keyword id="KW-0234">DNA repair</keyword>
<keyword id="KW-0235">DNA replication</keyword>
<keyword id="KW-0539">Nucleus</keyword>
<keyword id="KW-1185">Reference proteome</keyword>
<keyword id="KW-0677">Repeat</keyword>
<keyword id="KW-0853">WD repeat</keyword>
<proteinExistence type="evidence at protein level"/>
<evidence type="ECO:0000250" key="1">
    <source>
        <dbReference type="UniProtKB" id="Q13112"/>
    </source>
</evidence>
<evidence type="ECO:0000256" key="2">
    <source>
        <dbReference type="SAM" id="MobiDB-lite"/>
    </source>
</evidence>
<evidence type="ECO:0000269" key="3">
    <source>
    </source>
</evidence>
<evidence type="ECO:0000305" key="4"/>
<accession>Q5R1S9</accession>
<accession>Q5ZLM9</accession>
<feature type="chain" id="PRO_0000373880" description="Chromatin assembly factor 1 subunit B">
    <location>
        <begin position="1"/>
        <end position="566"/>
    </location>
</feature>
<feature type="repeat" description="WD 1">
    <location>
        <begin position="11"/>
        <end position="54"/>
    </location>
</feature>
<feature type="repeat" description="WD 2">
    <location>
        <begin position="64"/>
        <end position="103"/>
    </location>
</feature>
<feature type="repeat" description="WD 3">
    <location>
        <begin position="127"/>
        <end position="166"/>
    </location>
</feature>
<feature type="repeat" description="WD 4">
    <location>
        <begin position="169"/>
        <end position="208"/>
    </location>
</feature>
<feature type="repeat" description="WD 5">
    <location>
        <begin position="228"/>
        <end position="279"/>
    </location>
</feature>
<feature type="repeat" description="WD 6">
    <location>
        <begin position="351"/>
        <end position="392"/>
    </location>
</feature>
<feature type="region of interest" description="Disordered" evidence="2">
    <location>
        <begin position="411"/>
        <end position="481"/>
    </location>
</feature>
<feature type="region of interest" description="Disordered" evidence="2">
    <location>
        <begin position="501"/>
        <end position="566"/>
    </location>
</feature>
<feature type="compositionally biased region" description="Polar residues" evidence="2">
    <location>
        <begin position="425"/>
        <end position="437"/>
    </location>
</feature>
<feature type="compositionally biased region" description="Polar residues" evidence="2">
    <location>
        <begin position="469"/>
        <end position="478"/>
    </location>
</feature>
<feature type="sequence conflict" description="In Ref. 2; CAG31364." evidence="4" ref="2">
    <original>T</original>
    <variation>A</variation>
    <location>
        <position position="434"/>
    </location>
</feature>
<feature type="sequence conflict" description="In Ref. 2; CAG31364." evidence="4" ref="2">
    <original>P</original>
    <variation>H</variation>
    <location>
        <position position="520"/>
    </location>
</feature>
<feature type="sequence conflict" description="In Ref. 2; CAG31364." evidence="4" ref="2">
    <original>G</original>
    <variation>D</variation>
    <location>
        <position position="533"/>
    </location>
</feature>
<dbReference type="EMBL" id="AB195693">
    <property type="protein sequence ID" value="BAD72953.1"/>
    <property type="molecule type" value="mRNA"/>
</dbReference>
<dbReference type="EMBL" id="AJ719705">
    <property type="protein sequence ID" value="CAG31364.1"/>
    <property type="molecule type" value="mRNA"/>
</dbReference>
<dbReference type="RefSeq" id="NP_001008677.2">
    <property type="nucleotide sequence ID" value="NM_001008677.2"/>
</dbReference>
<dbReference type="SMR" id="Q5R1S9"/>
<dbReference type="BioGRID" id="679736">
    <property type="interactions" value="1"/>
</dbReference>
<dbReference type="FunCoup" id="Q5R1S9">
    <property type="interactions" value="1701"/>
</dbReference>
<dbReference type="IntAct" id="Q5R1S9">
    <property type="interactions" value="1"/>
</dbReference>
<dbReference type="STRING" id="9031.ENSGALP00000073745"/>
<dbReference type="PaxDb" id="9031-ENSGALP00000025797"/>
<dbReference type="GeneID" id="418514"/>
<dbReference type="KEGG" id="gga:418514"/>
<dbReference type="CTD" id="8208"/>
<dbReference type="VEuPathDB" id="HostDB:geneid_418514"/>
<dbReference type="eggNOG" id="KOG1009">
    <property type="taxonomic scope" value="Eukaryota"/>
</dbReference>
<dbReference type="InParanoid" id="Q5R1S9"/>
<dbReference type="OrthoDB" id="71227at2759"/>
<dbReference type="PhylomeDB" id="Q5R1S9"/>
<dbReference type="PRO" id="PR:Q5R1S9"/>
<dbReference type="Proteomes" id="UP000000539">
    <property type="component" value="Unassembled WGS sequence"/>
</dbReference>
<dbReference type="GO" id="GO:0033186">
    <property type="term" value="C:CAF-1 complex"/>
    <property type="evidence" value="ECO:0000250"/>
    <property type="project" value="UniProtKB"/>
</dbReference>
<dbReference type="GO" id="GO:0005634">
    <property type="term" value="C:nucleus"/>
    <property type="evidence" value="ECO:0000318"/>
    <property type="project" value="GO_Central"/>
</dbReference>
<dbReference type="GO" id="GO:0006281">
    <property type="term" value="P:DNA repair"/>
    <property type="evidence" value="ECO:0007669"/>
    <property type="project" value="UniProtKB-KW"/>
</dbReference>
<dbReference type="GO" id="GO:0006260">
    <property type="term" value="P:DNA replication"/>
    <property type="evidence" value="ECO:0007669"/>
    <property type="project" value="UniProtKB-KW"/>
</dbReference>
<dbReference type="GO" id="GO:0006335">
    <property type="term" value="P:DNA replication-dependent chromatin assembly"/>
    <property type="evidence" value="ECO:0000250"/>
    <property type="project" value="UniProtKB"/>
</dbReference>
<dbReference type="GO" id="GO:0006334">
    <property type="term" value="P:nucleosome assembly"/>
    <property type="evidence" value="ECO:0000318"/>
    <property type="project" value="GO_Central"/>
</dbReference>
<dbReference type="FunFam" id="2.130.10.10:FF:000248">
    <property type="entry name" value="Chromatin assembly factor 1 subunit B"/>
    <property type="match status" value="1"/>
</dbReference>
<dbReference type="FunFam" id="2.130.10.10:FF:000274">
    <property type="entry name" value="Chromatin assembly factor 1 subunit B"/>
    <property type="match status" value="1"/>
</dbReference>
<dbReference type="Gene3D" id="2.130.10.10">
    <property type="entry name" value="YVTN repeat-like/Quinoprotein amine dehydrogenase"/>
    <property type="match status" value="2"/>
</dbReference>
<dbReference type="InterPro" id="IPR029129">
    <property type="entry name" value="CAF1_p60_C"/>
</dbReference>
<dbReference type="InterPro" id="IPR055410">
    <property type="entry name" value="CAF1B_HIR1_beta-prop"/>
</dbReference>
<dbReference type="InterPro" id="IPR001632">
    <property type="entry name" value="Gprotein_B"/>
</dbReference>
<dbReference type="InterPro" id="IPR045145">
    <property type="entry name" value="PTHR15271"/>
</dbReference>
<dbReference type="InterPro" id="IPR015943">
    <property type="entry name" value="WD40/YVTN_repeat-like_dom_sf"/>
</dbReference>
<dbReference type="InterPro" id="IPR019775">
    <property type="entry name" value="WD40_repeat_CS"/>
</dbReference>
<dbReference type="InterPro" id="IPR036322">
    <property type="entry name" value="WD40_repeat_dom_sf"/>
</dbReference>
<dbReference type="InterPro" id="IPR001680">
    <property type="entry name" value="WD40_rpt"/>
</dbReference>
<dbReference type="PANTHER" id="PTHR15271">
    <property type="entry name" value="CHROMATIN ASSEMBLY FACTOR 1 SUBUNIT B"/>
    <property type="match status" value="1"/>
</dbReference>
<dbReference type="PANTHER" id="PTHR15271:SF4">
    <property type="entry name" value="CHROMATIN ASSEMBLY FACTOR 1 SUBUNIT B"/>
    <property type="match status" value="1"/>
</dbReference>
<dbReference type="Pfam" id="PF24105">
    <property type="entry name" value="Beta-prop_CAF1B_HIR1"/>
    <property type="match status" value="1"/>
</dbReference>
<dbReference type="Pfam" id="PF15512">
    <property type="entry name" value="CAF-1_p60_C"/>
    <property type="match status" value="1"/>
</dbReference>
<dbReference type="PRINTS" id="PR00319">
    <property type="entry name" value="GPROTEINB"/>
</dbReference>
<dbReference type="SMART" id="SM00320">
    <property type="entry name" value="WD40"/>
    <property type="match status" value="5"/>
</dbReference>
<dbReference type="SUPFAM" id="SSF50978">
    <property type="entry name" value="WD40 repeat-like"/>
    <property type="match status" value="1"/>
</dbReference>
<dbReference type="PROSITE" id="PS00678">
    <property type="entry name" value="WD_REPEATS_1"/>
    <property type="match status" value="1"/>
</dbReference>
<dbReference type="PROSITE" id="PS50082">
    <property type="entry name" value="WD_REPEATS_2"/>
    <property type="match status" value="3"/>
</dbReference>
<dbReference type="PROSITE" id="PS50294">
    <property type="entry name" value="WD_REPEATS_REGION"/>
    <property type="match status" value="1"/>
</dbReference>
<gene>
    <name type="primary">CHAF1B</name>
    <name type="synonym">CAF1P60</name>
    <name type="ORF">RCJMB04_5h12</name>
</gene>
<sequence>MKVITCEIAWHNKEPVYSLDFQHGTDGKINRLASAGVDTAVRVWKVEKGPDGKAIVEFLSNLARHTKAVNVVRFSPSGEVLASGGDDAVILLWKLNDSKELEPLAFQDEDEAQLNKENWTVVKTLRGHLEDVYDICWTSDGNYMASASVDNTAIMWDVVKGQKVSILNEHKSYVQGITWDPLGQYIATLSCDRVLRVYNTQTKRVAFNVTKMPSESGAEGEARSYRMFHDDSMKSFFRRLSFTPDGSLLLTPAGCVESGENVTNTTYVFSRNNLKRPMGHLPCPGKATLAVRCCPVYFELRQALNKGEVSQKSSPALLNLPYRLVFAVASEDSVLFYDTEQSFPFGYVSNIHYHTLSDISWSSDGAFLAISSTDGYCSFVTFEKDELGIPLKEKPQIHVRTSVVTEKKVKKSQPNKVISPGSRLTEGTSLSTPTLQPKTPVAAAKDLPSTPVGIKNVPVSSSEERKISQPASQSTKVNQPRRITLNTLQAWSKTPRRVNLIPLKPDTPASVYTDTVPVPPSSEQEHERPLPSGDSLQNPPASKRPRTEEMPLSVSAEDQIGCKPNK</sequence>
<protein>
    <recommendedName>
        <fullName>Chromatin assembly factor 1 subunit B</fullName>
        <shortName>CAF-1 subunit B</shortName>
    </recommendedName>
    <alternativeName>
        <fullName>Chromatin assembly factor I p60 subunit</fullName>
        <shortName>CAF-I 60 kDa subunit</shortName>
        <shortName>CAF-I p60</shortName>
    </alternativeName>
</protein>
<organism>
    <name type="scientific">Gallus gallus</name>
    <name type="common">Chicken</name>
    <dbReference type="NCBI Taxonomy" id="9031"/>
    <lineage>
        <taxon>Eukaryota</taxon>
        <taxon>Metazoa</taxon>
        <taxon>Chordata</taxon>
        <taxon>Craniata</taxon>
        <taxon>Vertebrata</taxon>
        <taxon>Euteleostomi</taxon>
        <taxon>Archelosauria</taxon>
        <taxon>Archosauria</taxon>
        <taxon>Dinosauria</taxon>
        <taxon>Saurischia</taxon>
        <taxon>Theropoda</taxon>
        <taxon>Coelurosauria</taxon>
        <taxon>Aves</taxon>
        <taxon>Neognathae</taxon>
        <taxon>Galloanserae</taxon>
        <taxon>Galliformes</taxon>
        <taxon>Phasianidae</taxon>
        <taxon>Phasianinae</taxon>
        <taxon>Gallus</taxon>
    </lineage>
</organism>
<name>CAF1B_CHICK</name>
<reference key="1">
    <citation type="journal article" date="2007" name="Mol. Biol. Cell">
        <title>Essential role of chromatin assembly factor-1-mediated rapid nucleosome assembly for DNA replication and cell division in vertebrate cells.</title>
        <authorList>
            <person name="Takami Y."/>
            <person name="Ono T."/>
            <person name="Fukagawa T."/>
            <person name="Shibahara K."/>
            <person name="Nakayama T."/>
        </authorList>
    </citation>
    <scope>NUCLEOTIDE SEQUENCE [MRNA]</scope>
    <scope>FUNCTION</scope>
    <scope>INTERACTION WITH CHAF1A</scope>
    <source>
        <tissue>B-cell</tissue>
    </source>
</reference>
<reference key="2">
    <citation type="journal article" date="2005" name="Genome Biol.">
        <title>Full-length cDNAs from chicken bursal lymphocytes to facilitate gene function analysis.</title>
        <authorList>
            <person name="Caldwell R.B."/>
            <person name="Kierzek A.M."/>
            <person name="Arakawa H."/>
            <person name="Bezzubov Y."/>
            <person name="Zaim J."/>
            <person name="Fiedler P."/>
            <person name="Kutter S."/>
            <person name="Blagodatski A."/>
            <person name="Kostovska D."/>
            <person name="Koter M."/>
            <person name="Plachy J."/>
            <person name="Carninci P."/>
            <person name="Hayashizaki Y."/>
            <person name="Buerstedde J.-M."/>
        </authorList>
    </citation>
    <scope>NUCLEOTIDE SEQUENCE [LARGE SCALE MRNA]</scope>
    <source>
        <strain>CB</strain>
        <tissue>Bursa of Fabricius</tissue>
    </source>
</reference>
<comment type="function">
    <text evidence="3">Acts as a component of the histone chaperone complex chromatin assembly factor 1 (CAF-1), which assembles histone octamers onto DNA during replication and repair. CAF-1 performs the first step of the nucleosome assembly process, bringing newly synthesized histones H3 and H4 to replicating DNA; histones H2A/H2B can bind to this chromatin precursor subsequent to DNA replication to complete the histone octamer.</text>
</comment>
<comment type="subunit">
    <text evidence="3">Interacts with CHAF1A.</text>
</comment>
<comment type="interaction">
    <interactant intactId="EBI-996875">
        <id>Q5R1S9</id>
    </interactant>
    <interactant intactId="EBI-996834">
        <id>Q3C1E9</id>
        <label>ASF1</label>
    </interactant>
    <organismsDiffer>false</organismsDiffer>
    <experiments>2</experiments>
</comment>
<comment type="subcellular location">
    <subcellularLocation>
        <location evidence="1">Nucleus</location>
    </subcellularLocation>
</comment>
<comment type="similarity">
    <text evidence="4">Belongs to the WD repeat HIR1 family.</text>
</comment>